<proteinExistence type="evidence at transcript level"/>
<organism>
    <name type="scientific">Isometrus maculatus</name>
    <name type="common">Lesser brown scorpion</name>
    <name type="synonym">Scorpio maculatus</name>
    <dbReference type="NCBI Taxonomy" id="497827"/>
    <lineage>
        <taxon>Eukaryota</taxon>
        <taxon>Metazoa</taxon>
        <taxon>Ecdysozoa</taxon>
        <taxon>Arthropoda</taxon>
        <taxon>Chelicerata</taxon>
        <taxon>Arachnida</taxon>
        <taxon>Scorpiones</taxon>
        <taxon>Buthida</taxon>
        <taxon>Buthoidea</taxon>
        <taxon>Buthidae</taxon>
        <taxon>Isometrus</taxon>
    </lineage>
</organism>
<dbReference type="EMBL" id="EU252395">
    <property type="protein sequence ID" value="ACD11957.1"/>
    <property type="molecule type" value="mRNA"/>
</dbReference>
<dbReference type="SMR" id="P0DJL0"/>
<dbReference type="GO" id="GO:0005576">
    <property type="term" value="C:extracellular region"/>
    <property type="evidence" value="ECO:0007669"/>
    <property type="project" value="UniProtKB-SubCell"/>
</dbReference>
<dbReference type="GO" id="GO:0015459">
    <property type="term" value="F:potassium channel regulator activity"/>
    <property type="evidence" value="ECO:0007669"/>
    <property type="project" value="UniProtKB-KW"/>
</dbReference>
<dbReference type="GO" id="GO:0090729">
    <property type="term" value="F:toxin activity"/>
    <property type="evidence" value="ECO:0007669"/>
    <property type="project" value="UniProtKB-KW"/>
</dbReference>
<name>CLKTX_ISOMC</name>
<reference evidence="8" key="1">
    <citation type="journal article" date="2011" name="J. Biochem. Mol. Toxicol.">
        <title>ImKTx1, a new Kv1.3 channel blocker with a unique primary structure.</title>
        <authorList>
            <person name="Chen Z."/>
            <person name="Hu Y."/>
            <person name="Han S."/>
            <person name="Yin S."/>
            <person name="He Y."/>
            <person name="Wu Y."/>
            <person name="Cao Z."/>
            <person name="Li W."/>
        </authorList>
    </citation>
    <scope>NUCLEOTIDE SEQUENCE [MRNA]</scope>
    <scope>SYNTHESIS</scope>
    <scope>FUNCTION</scope>
    <source>
        <tissue>Venom gland</tissue>
    </source>
</reference>
<protein>
    <recommendedName>
        <fullName evidence="5">Potassium channel toxin KTx1</fullName>
        <shortName evidence="5">ImKTx1</shortName>
    </recommendedName>
</protein>
<keyword id="KW-1015">Disulfide bond</keyword>
<keyword id="KW-0872">Ion channel impairing toxin</keyword>
<keyword id="KW-0960">Knottin</keyword>
<keyword id="KW-0528">Neurotoxin</keyword>
<keyword id="KW-0632">Potassium channel impairing toxin</keyword>
<keyword id="KW-0964">Secreted</keyword>
<keyword id="KW-0732">Signal</keyword>
<keyword id="KW-0800">Toxin</keyword>
<comment type="function">
    <text evidence="2 4">This recombinant peptide inhibits voltage-gated potassium channels mKv1.3/KCNA3 (IC(50)=1.70 uM), mKv1.1/KCNA1 (10 uM inhibits 40% of currents) and hKv1.2/KCNA2 (10 uM inhibits 42% of currents) (PubMed:21308893). May also increase intracellular calcium release through the activation of nuclear inositol 1,4,5-trisphosphate receptors (ITPR) of cardiomyocytes, thereby causing an increase in the contraction frequency of these cells (By similarity).</text>
</comment>
<comment type="subcellular location">
    <subcellularLocation>
        <location evidence="7">Secreted</location>
    </subcellularLocation>
</comment>
<comment type="tissue specificity">
    <text evidence="7">Expressed by the venom gland.</text>
</comment>
<comment type="domain">
    <text evidence="3">The presence of a 'disulfide through disulfide knot' structurally defines this protein as a knottin.</text>
</comment>
<comment type="miscellaneous">
    <text evidence="4">Negative results: does not show effect on rNav1.2/SCN2A and mNav1.4/SCN4A.</text>
</comment>
<comment type="similarity">
    <text evidence="6">Belongs to the scorpion calcin-like family. KTX subfamily.</text>
</comment>
<evidence type="ECO:0000250" key="1"/>
<evidence type="ECO:0000250" key="2">
    <source>
        <dbReference type="UniProtKB" id="P0DM29"/>
    </source>
</evidence>
<evidence type="ECO:0000250" key="3">
    <source>
        <dbReference type="UniProtKB" id="P59868"/>
    </source>
</evidence>
<evidence type="ECO:0000269" key="4">
    <source>
    </source>
</evidence>
<evidence type="ECO:0000303" key="5">
    <source>
    </source>
</evidence>
<evidence type="ECO:0000305" key="6"/>
<evidence type="ECO:0000305" key="7">
    <source>
    </source>
</evidence>
<evidence type="ECO:0000312" key="8">
    <source>
        <dbReference type="EMBL" id="ACD11957.1"/>
    </source>
</evidence>
<accession>P0DJL0</accession>
<accession>A0A0U1TZF9</accession>
<sequence>FLVLLLVSLMCYAEIAEGSQPTECKYGRPCNSDRDCCWEYRCLSSGREYTCKQDPGP</sequence>
<feature type="signal peptide" evidence="1">
    <location>
        <begin position="1" status="less than"/>
        <end position="13"/>
    </location>
</feature>
<feature type="propeptide" id="PRO_0000422065" evidence="1">
    <location>
        <begin position="14"/>
        <end position="18"/>
    </location>
</feature>
<feature type="chain" id="PRO_0000422066" description="Potassium channel toxin KTx1">
    <location>
        <begin position="19"/>
        <end position="57"/>
    </location>
</feature>
<feature type="disulfide bond" evidence="3">
    <location>
        <begin position="24"/>
        <end position="37"/>
    </location>
</feature>
<feature type="disulfide bond" evidence="3">
    <location>
        <begin position="30"/>
        <end position="42"/>
    </location>
</feature>
<feature type="disulfide bond" evidence="3">
    <location>
        <begin position="36"/>
        <end position="51"/>
    </location>
</feature>
<feature type="non-terminal residue">
    <location>
        <position position="1"/>
    </location>
</feature>